<comment type="cofactor">
    <cofactor evidence="1">
        <name>heme</name>
        <dbReference type="ChEBI" id="CHEBI:30413"/>
    </cofactor>
</comment>
<comment type="subcellular location">
    <subcellularLocation>
        <location evidence="2">Membrane</location>
    </subcellularLocation>
</comment>
<comment type="induction">
    <text>By methyl jasmonate (meJA).</text>
</comment>
<comment type="similarity">
    <text evidence="2">Belongs to the cytochrome P450 family.</text>
</comment>
<accession>Q42799</accession>
<proteinExistence type="evidence at transcript level"/>
<feature type="chain" id="PRO_0000052189" description="Cytochrome P450 93A2">
    <location>
        <begin position="1"/>
        <end position="502"/>
    </location>
</feature>
<feature type="binding site" description="axial binding residue" evidence="1">
    <location>
        <position position="440"/>
    </location>
    <ligand>
        <name>heme</name>
        <dbReference type="ChEBI" id="CHEBI:30413"/>
    </ligand>
    <ligandPart>
        <name>Fe</name>
        <dbReference type="ChEBI" id="CHEBI:18248"/>
    </ligandPart>
</feature>
<keyword id="KW-0349">Heme</keyword>
<keyword id="KW-0408">Iron</keyword>
<keyword id="KW-0472">Membrane</keyword>
<keyword id="KW-0479">Metal-binding</keyword>
<keyword id="KW-0503">Monooxygenase</keyword>
<keyword id="KW-0560">Oxidoreductase</keyword>
<keyword id="KW-1185">Reference proteome</keyword>
<name>C93A2_SOYBN</name>
<organism>
    <name type="scientific">Glycine max</name>
    <name type="common">Soybean</name>
    <name type="synonym">Glycine hispida</name>
    <dbReference type="NCBI Taxonomy" id="3847"/>
    <lineage>
        <taxon>Eukaryota</taxon>
        <taxon>Viridiplantae</taxon>
        <taxon>Streptophyta</taxon>
        <taxon>Embryophyta</taxon>
        <taxon>Tracheophyta</taxon>
        <taxon>Spermatophyta</taxon>
        <taxon>Magnoliopsida</taxon>
        <taxon>eudicotyledons</taxon>
        <taxon>Gunneridae</taxon>
        <taxon>Pentapetalae</taxon>
        <taxon>rosids</taxon>
        <taxon>fabids</taxon>
        <taxon>Fabales</taxon>
        <taxon>Fabaceae</taxon>
        <taxon>Papilionoideae</taxon>
        <taxon>50 kb inversion clade</taxon>
        <taxon>NPAAA clade</taxon>
        <taxon>indigoferoid/millettioid clade</taxon>
        <taxon>Phaseoleae</taxon>
        <taxon>Glycine</taxon>
        <taxon>Glycine subgen. Soja</taxon>
    </lineage>
</organism>
<sequence length="502" mass="57176">MAYQVLVICVVSSIVFAYIVWRKERKKKLPPSPKGLPIIGHLHLVSPIPHQDFYKLSLRHGPIMQLFLGSVPCVVASTAEAAKEFLKTHEINFSNRPGQNVAVQFLTYVFGPYGPSVKFIKKLCMSELLGGRMLDQFLPVRQQETKKFIKRVLQKGIAGEAVDFGGEFMRLSNNIISRMTMNQTSSEDEKQAEEMRMLVADVAELMGTFNVSDFIWFLKPFDLQGFNKRIRKTRIRFDAVLDRIIKQREEERRNNKEIGGTRQFKDILDVLLDIGEDDSSEIKLTKENIKAFIMDIFVAGTDTSAATMEWAMAELINNPCVLEKARQEIDAVVGNSRIIEESDIVNLPYLQAIVRETLRIHPGGPLIVRESSKSVVVCGYEIPAKTRLFVNVWAIGRDPNHWENPFEFRPERFFENGQSQLDVRGQHYHFIPFGSGRRSCPGTSLALQIVHVNLAIMIQCFQWKFDNGNNKVDMEEKSGITLPRAHPIICVPVPRLNPFPVM</sequence>
<reference key="1">
    <citation type="online journal article" date="1997" name="Plant Gene Register">
        <title>Molecular cloning of a cDNA encoding cytochrome P450 CYP93A2 from soybean suspension-cultured cells.</title>
        <authorList>
            <person name="Suzuki G."/>
            <person name="Ohta H."/>
            <person name="Kato T."/>
            <person name="Shibata D."/>
            <person name="Masuda T."/>
            <person name="Takamiya K."/>
        </authorList>
        <locator>PGR97-087</locator>
    </citation>
    <scope>NUCLEOTIDE SEQUENCE [MRNA]</scope>
</reference>
<dbReference type="EC" id="1.14.-.-"/>
<dbReference type="EMBL" id="D86351">
    <property type="protein sequence ID" value="BAA13076.1"/>
    <property type="molecule type" value="mRNA"/>
</dbReference>
<dbReference type="PIR" id="T07141">
    <property type="entry name" value="T07141"/>
</dbReference>
<dbReference type="RefSeq" id="NP_001240973.1">
    <property type="nucleotide sequence ID" value="NM_001254044.2"/>
</dbReference>
<dbReference type="SMR" id="Q42799"/>
<dbReference type="FunCoup" id="Q42799">
    <property type="interactions" value="331"/>
</dbReference>
<dbReference type="STRING" id="3847.Q42799"/>
<dbReference type="PaxDb" id="3847-GLYMA19G32650.1"/>
<dbReference type="EnsemblPlants" id="KRG95343">
    <property type="protein sequence ID" value="KRG95343"/>
    <property type="gene ID" value="GLYMA_19G144700"/>
</dbReference>
<dbReference type="GeneID" id="100797067"/>
<dbReference type="Gramene" id="KRG95343">
    <property type="protein sequence ID" value="KRG95343"/>
    <property type="gene ID" value="GLYMA_19G144700"/>
</dbReference>
<dbReference type="KEGG" id="gmx:100797067"/>
<dbReference type="eggNOG" id="KOG0156">
    <property type="taxonomic scope" value="Eukaryota"/>
</dbReference>
<dbReference type="HOGENOM" id="CLU_001570_4_0_1"/>
<dbReference type="InParanoid" id="Q42799"/>
<dbReference type="OMA" id="NNPCVLE"/>
<dbReference type="OrthoDB" id="1103324at2759"/>
<dbReference type="Proteomes" id="UP000008827">
    <property type="component" value="Chromosome 19"/>
</dbReference>
<dbReference type="GO" id="GO:0016020">
    <property type="term" value="C:membrane"/>
    <property type="evidence" value="ECO:0000318"/>
    <property type="project" value="GO_Central"/>
</dbReference>
<dbReference type="GO" id="GO:0020037">
    <property type="term" value="F:heme binding"/>
    <property type="evidence" value="ECO:0007669"/>
    <property type="project" value="InterPro"/>
</dbReference>
<dbReference type="GO" id="GO:0005506">
    <property type="term" value="F:iron ion binding"/>
    <property type="evidence" value="ECO:0007669"/>
    <property type="project" value="InterPro"/>
</dbReference>
<dbReference type="GO" id="GO:0016709">
    <property type="term" value="F:oxidoreductase activity, acting on paired donors, with incorporation or reduction of molecular oxygen, NAD(P)H as one donor, and incorporation of one atom of oxygen"/>
    <property type="evidence" value="ECO:0000318"/>
    <property type="project" value="GO_Central"/>
</dbReference>
<dbReference type="CDD" id="cd20655">
    <property type="entry name" value="CYP93"/>
    <property type="match status" value="1"/>
</dbReference>
<dbReference type="FunFam" id="1.10.630.10:FF:000019">
    <property type="entry name" value="Cytochrome P450 family protein"/>
    <property type="match status" value="1"/>
</dbReference>
<dbReference type="Gene3D" id="1.10.630.10">
    <property type="entry name" value="Cytochrome P450"/>
    <property type="match status" value="1"/>
</dbReference>
<dbReference type="InterPro" id="IPR001128">
    <property type="entry name" value="Cyt_P450"/>
</dbReference>
<dbReference type="InterPro" id="IPR017972">
    <property type="entry name" value="Cyt_P450_CS"/>
</dbReference>
<dbReference type="InterPro" id="IPR002401">
    <property type="entry name" value="Cyt_P450_E_grp-I"/>
</dbReference>
<dbReference type="InterPro" id="IPR036396">
    <property type="entry name" value="Cyt_P450_sf"/>
</dbReference>
<dbReference type="PANTHER" id="PTHR47943:SF8">
    <property type="entry name" value="CYTOCHROME P450"/>
    <property type="match status" value="1"/>
</dbReference>
<dbReference type="PANTHER" id="PTHR47943">
    <property type="entry name" value="CYTOCHROME P450 93A3-LIKE"/>
    <property type="match status" value="1"/>
</dbReference>
<dbReference type="Pfam" id="PF00067">
    <property type="entry name" value="p450"/>
    <property type="match status" value="1"/>
</dbReference>
<dbReference type="PRINTS" id="PR00463">
    <property type="entry name" value="EP450I"/>
</dbReference>
<dbReference type="PRINTS" id="PR00385">
    <property type="entry name" value="P450"/>
</dbReference>
<dbReference type="SUPFAM" id="SSF48264">
    <property type="entry name" value="Cytochrome P450"/>
    <property type="match status" value="1"/>
</dbReference>
<dbReference type="PROSITE" id="PS00086">
    <property type="entry name" value="CYTOCHROME_P450"/>
    <property type="match status" value="1"/>
</dbReference>
<protein>
    <recommendedName>
        <fullName>Cytochrome P450 93A2</fullName>
        <ecNumber>1.14.-.-</ecNumber>
    </recommendedName>
</protein>
<gene>
    <name type="primary">CYP93A2</name>
</gene>
<evidence type="ECO:0000250" key="1"/>
<evidence type="ECO:0000305" key="2"/>